<keyword id="KW-0025">Alternative splicing</keyword>
<keyword id="KW-1267">Proteomics identification</keyword>
<keyword id="KW-1185">Reference proteome</keyword>
<comment type="alternative products">
    <event type="alternative splicing"/>
    <isoform>
        <id>Q6ZMT9-1</id>
        <name>1</name>
        <sequence type="displayed"/>
    </isoform>
    <isoform>
        <id>Q6ZMT9-2</id>
        <name>2</name>
        <sequence type="described" ref="VSP_035302 VSP_035303"/>
    </isoform>
</comment>
<name>DTHD1_HUMAN</name>
<protein>
    <recommendedName>
        <fullName>Death domain-containing protein 1</fullName>
    </recommendedName>
</protein>
<proteinExistence type="evidence at protein level"/>
<dbReference type="EMBL" id="AK131492">
    <property type="protein sequence ID" value="BAD18636.1"/>
    <property type="molecule type" value="mRNA"/>
</dbReference>
<dbReference type="EMBL" id="AK304357">
    <property type="protein sequence ID" value="BAG65199.1"/>
    <property type="molecule type" value="mRNA"/>
</dbReference>
<dbReference type="EMBL" id="AK316523">
    <property type="protein sequence ID" value="BAH14894.1"/>
    <property type="molecule type" value="mRNA"/>
</dbReference>
<dbReference type="EMBL" id="AC104078">
    <property type="status" value="NOT_ANNOTATED_CDS"/>
    <property type="molecule type" value="Genomic_DNA"/>
</dbReference>
<dbReference type="EMBL" id="BC157885">
    <property type="protein sequence ID" value="AAI57886.1"/>
    <property type="molecule type" value="mRNA"/>
</dbReference>
<dbReference type="RefSeq" id="NP_001130008.2">
    <molecule id="Q6ZMT9-2"/>
    <property type="nucleotide sequence ID" value="NM_001136536.5"/>
</dbReference>
<dbReference type="RefSeq" id="NP_001164171.1">
    <property type="nucleotide sequence ID" value="NM_001170700.2"/>
</dbReference>
<dbReference type="BioGRID" id="134936">
    <property type="interactions" value="2"/>
</dbReference>
<dbReference type="FunCoup" id="Q6ZMT9">
    <property type="interactions" value="101"/>
</dbReference>
<dbReference type="IntAct" id="Q6ZMT9">
    <property type="interactions" value="1"/>
</dbReference>
<dbReference type="STRING" id="9606.ENSP00000401597"/>
<dbReference type="iPTMnet" id="Q6ZMT9"/>
<dbReference type="PhosphoSitePlus" id="Q6ZMT9"/>
<dbReference type="BioMuta" id="DTHD1"/>
<dbReference type="DMDM" id="300669694"/>
<dbReference type="jPOST" id="Q6ZMT9"/>
<dbReference type="MassIVE" id="Q6ZMT9"/>
<dbReference type="PaxDb" id="9606-ENSP00000401597"/>
<dbReference type="PeptideAtlas" id="Q6ZMT9"/>
<dbReference type="ProteomicsDB" id="67915">
    <molecule id="Q6ZMT9-1"/>
</dbReference>
<dbReference type="ProteomicsDB" id="67916">
    <molecule id="Q6ZMT9-2"/>
</dbReference>
<dbReference type="Antibodypedia" id="52334">
    <property type="antibodies" value="1 antibodies from 1 providers"/>
</dbReference>
<dbReference type="DNASU" id="401124"/>
<dbReference type="Ensembl" id="ENST00000357504.7">
    <molecule id="Q6ZMT9-2"/>
    <property type="protein sequence ID" value="ENSP00000350103.3"/>
    <property type="gene ID" value="ENSG00000197057.10"/>
</dbReference>
<dbReference type="Ensembl" id="ENST00000456874.3">
    <molecule id="Q6ZMT9-1"/>
    <property type="protein sequence ID" value="ENSP00000401597.2"/>
    <property type="gene ID" value="ENSG00000197057.10"/>
</dbReference>
<dbReference type="GeneID" id="401124"/>
<dbReference type="KEGG" id="hsa:401124"/>
<dbReference type="UCSC" id="uc011bxy.4">
    <molecule id="Q6ZMT9-1"/>
    <property type="organism name" value="human"/>
</dbReference>
<dbReference type="AGR" id="HGNC:37261"/>
<dbReference type="CTD" id="401124"/>
<dbReference type="DisGeNET" id="401124"/>
<dbReference type="GeneCards" id="DTHD1"/>
<dbReference type="HGNC" id="HGNC:37261">
    <property type="gene designation" value="DTHD1"/>
</dbReference>
<dbReference type="HPA" id="ENSG00000197057">
    <property type="expression patterns" value="Group enriched (fallopian tube, lung, lymphoid tissue)"/>
</dbReference>
<dbReference type="MalaCards" id="DTHD1"/>
<dbReference type="MIM" id="616979">
    <property type="type" value="gene"/>
</dbReference>
<dbReference type="neXtProt" id="NX_Q6ZMT9"/>
<dbReference type="OpenTargets" id="ENSG00000197057"/>
<dbReference type="PharmGKB" id="PA165663634"/>
<dbReference type="VEuPathDB" id="HostDB:ENSG00000197057"/>
<dbReference type="eggNOG" id="ENOG502QTTM">
    <property type="taxonomic scope" value="Eukaryota"/>
</dbReference>
<dbReference type="GeneTree" id="ENSGT00940000153404"/>
<dbReference type="HOGENOM" id="CLU_013631_0_0_1"/>
<dbReference type="InParanoid" id="Q6ZMT9"/>
<dbReference type="OrthoDB" id="6118651at2759"/>
<dbReference type="PAN-GO" id="Q6ZMT9">
    <property type="GO annotations" value="0 GO annotations based on evolutionary models"/>
</dbReference>
<dbReference type="PhylomeDB" id="Q6ZMT9"/>
<dbReference type="TreeFam" id="TF351910"/>
<dbReference type="PathwayCommons" id="Q6ZMT9"/>
<dbReference type="SignaLink" id="Q6ZMT9"/>
<dbReference type="BioGRID-ORCS" id="401124">
    <property type="hits" value="11 hits in 1102 CRISPR screens"/>
</dbReference>
<dbReference type="ChiTaRS" id="DTHD1">
    <property type="organism name" value="human"/>
</dbReference>
<dbReference type="GenomeRNAi" id="401124"/>
<dbReference type="Pharos" id="Q6ZMT9">
    <property type="development level" value="Tdark"/>
</dbReference>
<dbReference type="PRO" id="PR:Q6ZMT9"/>
<dbReference type="Proteomes" id="UP000005640">
    <property type="component" value="Chromosome 4"/>
</dbReference>
<dbReference type="RNAct" id="Q6ZMT9">
    <property type="molecule type" value="protein"/>
</dbReference>
<dbReference type="Bgee" id="ENSG00000197057">
    <property type="expression patterns" value="Expressed in right uterine tube and 85 other cell types or tissues"/>
</dbReference>
<dbReference type="ExpressionAtlas" id="Q6ZMT9">
    <property type="expression patterns" value="baseline and differential"/>
</dbReference>
<dbReference type="GO" id="GO:0007165">
    <property type="term" value="P:signal transduction"/>
    <property type="evidence" value="ECO:0007669"/>
    <property type="project" value="InterPro"/>
</dbReference>
<dbReference type="CDD" id="cd08779">
    <property type="entry name" value="Death_PIDD"/>
    <property type="match status" value="1"/>
</dbReference>
<dbReference type="Gene3D" id="2.60.220.30">
    <property type="match status" value="1"/>
</dbReference>
<dbReference type="Gene3D" id="1.10.533.10">
    <property type="entry name" value="Death Domain, Fas"/>
    <property type="match status" value="1"/>
</dbReference>
<dbReference type="InterPro" id="IPR011029">
    <property type="entry name" value="DEATH-like_dom_sf"/>
</dbReference>
<dbReference type="InterPro" id="IPR000488">
    <property type="entry name" value="Death_dom"/>
</dbReference>
<dbReference type="InterPro" id="IPR000906">
    <property type="entry name" value="ZU5_dom"/>
</dbReference>
<dbReference type="PANTHER" id="PTHR28336">
    <property type="entry name" value="BA1-643"/>
    <property type="match status" value="1"/>
</dbReference>
<dbReference type="PANTHER" id="PTHR28336:SF4">
    <property type="entry name" value="DEATH DOMAIN-CONTAINING PROTEIN 1"/>
    <property type="match status" value="1"/>
</dbReference>
<dbReference type="Pfam" id="PF00531">
    <property type="entry name" value="Death"/>
    <property type="match status" value="1"/>
</dbReference>
<dbReference type="SUPFAM" id="SSF47986">
    <property type="entry name" value="DEATH domain"/>
    <property type="match status" value="1"/>
</dbReference>
<dbReference type="PROSITE" id="PS50017">
    <property type="entry name" value="DEATH_DOMAIN"/>
    <property type="match status" value="1"/>
</dbReference>
<dbReference type="PROSITE" id="PS51145">
    <property type="entry name" value="ZU5"/>
    <property type="match status" value="2"/>
</dbReference>
<gene>
    <name type="primary">DTHD1</name>
</gene>
<reference key="1">
    <citation type="journal article" date="2004" name="Nat. Genet.">
        <title>Complete sequencing and characterization of 21,243 full-length human cDNAs.</title>
        <authorList>
            <person name="Ota T."/>
            <person name="Suzuki Y."/>
            <person name="Nishikawa T."/>
            <person name="Otsuki T."/>
            <person name="Sugiyama T."/>
            <person name="Irie R."/>
            <person name="Wakamatsu A."/>
            <person name="Hayashi K."/>
            <person name="Sato H."/>
            <person name="Nagai K."/>
            <person name="Kimura K."/>
            <person name="Makita H."/>
            <person name="Sekine M."/>
            <person name="Obayashi M."/>
            <person name="Nishi T."/>
            <person name="Shibahara T."/>
            <person name="Tanaka T."/>
            <person name="Ishii S."/>
            <person name="Yamamoto J."/>
            <person name="Saito K."/>
            <person name="Kawai Y."/>
            <person name="Isono Y."/>
            <person name="Nakamura Y."/>
            <person name="Nagahari K."/>
            <person name="Murakami K."/>
            <person name="Yasuda T."/>
            <person name="Iwayanagi T."/>
            <person name="Wagatsuma M."/>
            <person name="Shiratori A."/>
            <person name="Sudo H."/>
            <person name="Hosoiri T."/>
            <person name="Kaku Y."/>
            <person name="Kodaira H."/>
            <person name="Kondo H."/>
            <person name="Sugawara M."/>
            <person name="Takahashi M."/>
            <person name="Kanda K."/>
            <person name="Yokoi T."/>
            <person name="Furuya T."/>
            <person name="Kikkawa E."/>
            <person name="Omura Y."/>
            <person name="Abe K."/>
            <person name="Kamihara K."/>
            <person name="Katsuta N."/>
            <person name="Sato K."/>
            <person name="Tanikawa M."/>
            <person name="Yamazaki M."/>
            <person name="Ninomiya K."/>
            <person name="Ishibashi T."/>
            <person name="Yamashita H."/>
            <person name="Murakawa K."/>
            <person name="Fujimori K."/>
            <person name="Tanai H."/>
            <person name="Kimata M."/>
            <person name="Watanabe M."/>
            <person name="Hiraoka S."/>
            <person name="Chiba Y."/>
            <person name="Ishida S."/>
            <person name="Ono Y."/>
            <person name="Takiguchi S."/>
            <person name="Watanabe S."/>
            <person name="Yosida M."/>
            <person name="Hotuta T."/>
            <person name="Kusano J."/>
            <person name="Kanehori K."/>
            <person name="Takahashi-Fujii A."/>
            <person name="Hara H."/>
            <person name="Tanase T.-O."/>
            <person name="Nomura Y."/>
            <person name="Togiya S."/>
            <person name="Komai F."/>
            <person name="Hara R."/>
            <person name="Takeuchi K."/>
            <person name="Arita M."/>
            <person name="Imose N."/>
            <person name="Musashino K."/>
            <person name="Yuuki H."/>
            <person name="Oshima A."/>
            <person name="Sasaki N."/>
            <person name="Aotsuka S."/>
            <person name="Yoshikawa Y."/>
            <person name="Matsunawa H."/>
            <person name="Ichihara T."/>
            <person name="Shiohata N."/>
            <person name="Sano S."/>
            <person name="Moriya S."/>
            <person name="Momiyama H."/>
            <person name="Satoh N."/>
            <person name="Takami S."/>
            <person name="Terashima Y."/>
            <person name="Suzuki O."/>
            <person name="Nakagawa S."/>
            <person name="Senoh A."/>
            <person name="Mizoguchi H."/>
            <person name="Goto Y."/>
            <person name="Shimizu F."/>
            <person name="Wakebe H."/>
            <person name="Hishigaki H."/>
            <person name="Watanabe T."/>
            <person name="Sugiyama A."/>
            <person name="Takemoto M."/>
            <person name="Kawakami B."/>
            <person name="Yamazaki M."/>
            <person name="Watanabe K."/>
            <person name="Kumagai A."/>
            <person name="Itakura S."/>
            <person name="Fukuzumi Y."/>
            <person name="Fujimori Y."/>
            <person name="Komiyama M."/>
            <person name="Tashiro H."/>
            <person name="Tanigami A."/>
            <person name="Fujiwara T."/>
            <person name="Ono T."/>
            <person name="Yamada K."/>
            <person name="Fujii Y."/>
            <person name="Ozaki K."/>
            <person name="Hirao M."/>
            <person name="Ohmori Y."/>
            <person name="Kawabata A."/>
            <person name="Hikiji T."/>
            <person name="Kobatake N."/>
            <person name="Inagaki H."/>
            <person name="Ikema Y."/>
            <person name="Okamoto S."/>
            <person name="Okitani R."/>
            <person name="Kawakami T."/>
            <person name="Noguchi S."/>
            <person name="Itoh T."/>
            <person name="Shigeta K."/>
            <person name="Senba T."/>
            <person name="Matsumura K."/>
            <person name="Nakajima Y."/>
            <person name="Mizuno T."/>
            <person name="Morinaga M."/>
            <person name="Sasaki M."/>
            <person name="Togashi T."/>
            <person name="Oyama M."/>
            <person name="Hata H."/>
            <person name="Watanabe M."/>
            <person name="Komatsu T."/>
            <person name="Mizushima-Sugano J."/>
            <person name="Satoh T."/>
            <person name="Shirai Y."/>
            <person name="Takahashi Y."/>
            <person name="Nakagawa K."/>
            <person name="Okumura K."/>
            <person name="Nagase T."/>
            <person name="Nomura N."/>
            <person name="Kikuchi H."/>
            <person name="Masuho Y."/>
            <person name="Yamashita R."/>
            <person name="Nakai K."/>
            <person name="Yada T."/>
            <person name="Nakamura Y."/>
            <person name="Ohara O."/>
            <person name="Isogai T."/>
            <person name="Sugano S."/>
        </authorList>
    </citation>
    <scope>NUCLEOTIDE SEQUENCE [LARGE SCALE MRNA] (ISOFORM 2)</scope>
    <scope>VARIANTS ASP-179 AND HIS-662</scope>
    <source>
        <tissue>Trachea</tissue>
    </source>
</reference>
<reference key="2">
    <citation type="journal article" date="2005" name="Nature">
        <title>Generation and annotation of the DNA sequences of human chromosomes 2 and 4.</title>
        <authorList>
            <person name="Hillier L.W."/>
            <person name="Graves T.A."/>
            <person name="Fulton R.S."/>
            <person name="Fulton L.A."/>
            <person name="Pepin K.H."/>
            <person name="Minx P."/>
            <person name="Wagner-McPherson C."/>
            <person name="Layman D."/>
            <person name="Wylie K."/>
            <person name="Sekhon M."/>
            <person name="Becker M.C."/>
            <person name="Fewell G.A."/>
            <person name="Delehaunty K.D."/>
            <person name="Miner T.L."/>
            <person name="Nash W.E."/>
            <person name="Kremitzki C."/>
            <person name="Oddy L."/>
            <person name="Du H."/>
            <person name="Sun H."/>
            <person name="Bradshaw-Cordum H."/>
            <person name="Ali J."/>
            <person name="Carter J."/>
            <person name="Cordes M."/>
            <person name="Harris A."/>
            <person name="Isak A."/>
            <person name="van Brunt A."/>
            <person name="Nguyen C."/>
            <person name="Du F."/>
            <person name="Courtney L."/>
            <person name="Kalicki J."/>
            <person name="Ozersky P."/>
            <person name="Abbott S."/>
            <person name="Armstrong J."/>
            <person name="Belter E.A."/>
            <person name="Caruso L."/>
            <person name="Cedroni M."/>
            <person name="Cotton M."/>
            <person name="Davidson T."/>
            <person name="Desai A."/>
            <person name="Elliott G."/>
            <person name="Erb T."/>
            <person name="Fronick C."/>
            <person name="Gaige T."/>
            <person name="Haakenson W."/>
            <person name="Haglund K."/>
            <person name="Holmes A."/>
            <person name="Harkins R."/>
            <person name="Kim K."/>
            <person name="Kruchowski S.S."/>
            <person name="Strong C.M."/>
            <person name="Grewal N."/>
            <person name="Goyea E."/>
            <person name="Hou S."/>
            <person name="Levy A."/>
            <person name="Martinka S."/>
            <person name="Mead K."/>
            <person name="McLellan M.D."/>
            <person name="Meyer R."/>
            <person name="Randall-Maher J."/>
            <person name="Tomlinson C."/>
            <person name="Dauphin-Kohlberg S."/>
            <person name="Kozlowicz-Reilly A."/>
            <person name="Shah N."/>
            <person name="Swearengen-Shahid S."/>
            <person name="Snider J."/>
            <person name="Strong J.T."/>
            <person name="Thompson J."/>
            <person name="Yoakum M."/>
            <person name="Leonard S."/>
            <person name="Pearman C."/>
            <person name="Trani L."/>
            <person name="Radionenko M."/>
            <person name="Waligorski J.E."/>
            <person name="Wang C."/>
            <person name="Rock S.M."/>
            <person name="Tin-Wollam A.-M."/>
            <person name="Maupin R."/>
            <person name="Latreille P."/>
            <person name="Wendl M.C."/>
            <person name="Yang S.-P."/>
            <person name="Pohl C."/>
            <person name="Wallis J.W."/>
            <person name="Spieth J."/>
            <person name="Bieri T.A."/>
            <person name="Berkowicz N."/>
            <person name="Nelson J.O."/>
            <person name="Osborne J."/>
            <person name="Ding L."/>
            <person name="Meyer R."/>
            <person name="Sabo A."/>
            <person name="Shotland Y."/>
            <person name="Sinha P."/>
            <person name="Wohldmann P.E."/>
            <person name="Cook L.L."/>
            <person name="Hickenbotham M.T."/>
            <person name="Eldred J."/>
            <person name="Williams D."/>
            <person name="Jones T.A."/>
            <person name="She X."/>
            <person name="Ciccarelli F.D."/>
            <person name="Izaurralde E."/>
            <person name="Taylor J."/>
            <person name="Schmutz J."/>
            <person name="Myers R.M."/>
            <person name="Cox D.R."/>
            <person name="Huang X."/>
            <person name="McPherson J.D."/>
            <person name="Mardis E.R."/>
            <person name="Clifton S.W."/>
            <person name="Warren W.C."/>
            <person name="Chinwalla A.T."/>
            <person name="Eddy S.R."/>
            <person name="Marra M.A."/>
            <person name="Ovcharenko I."/>
            <person name="Furey T.S."/>
            <person name="Miller W."/>
            <person name="Eichler E.E."/>
            <person name="Bork P."/>
            <person name="Suyama M."/>
            <person name="Torrents D."/>
            <person name="Waterston R.H."/>
            <person name="Wilson R.K."/>
        </authorList>
    </citation>
    <scope>NUCLEOTIDE SEQUENCE [LARGE SCALE GENOMIC DNA]</scope>
</reference>
<reference key="3">
    <citation type="journal article" date="2004" name="Genome Res.">
        <title>The status, quality, and expansion of the NIH full-length cDNA project: the Mammalian Gene Collection (MGC).</title>
        <authorList>
            <consortium name="The MGC Project Team"/>
        </authorList>
    </citation>
    <scope>NUCLEOTIDE SEQUENCE [LARGE SCALE MRNA] (ISOFORM 1)</scope>
    <scope>VARIANTS ASP-179 AND CYS-552</scope>
    <source>
        <tissue>Brain</tissue>
    </source>
</reference>
<accession>Q6ZMT9</accession>
<accession>B2RXK4</accession>
<accession>B4E2N7</accession>
<sequence>MHDECTPQQTMSSIQDTKAADIAARGELNVIETATVSPTNGEESHYTNQVQLEKNKTHMSSALVEKENNTSLNGRVLGQEESQNKMFPDNAENEDDKQIEHMTVENINGNREETHGIIQTTETEIQETSESPREEMTTSSIICDISKKYINSTLPNDSENIKHKNNIMEKEYLDVLSDVTGPQVSCYITAPSYVLQQLECRIINHMSSLIVGDNEELVSNVITIECSDKEKRVPFPIGIAIPFTARYRGNYRDIMVKVCDINLQSSYLNPNSLEGMKGGYKGTCASVKVYKLGIFSVVSCLKKESFTVTKKGLALKSSMDSRISLNYPPGVFTSPVLVQLKIQPVDPALVAHLKAQQDTFYSVQSTSPLIHIQHPSTYPFQKPVTLFLPCSPYLDKNNLGSEIDHKRRASATINRITPSYFNRTKIASIRKPRKNASECLKLLGFRSQDSGWCGLDDVVKTIQSGLVSVELYEHLERFIVLHLSSTMDNSHLVTFVKSLEEAMLSTTACIVLSHQKDNPHRIAVLVVPSKDLSQVLKDLHLEGFGGPPEPSRHFQVREGEQLLLRFTGNIFASSNGKDYGKDYTLIFHLQRKPRLELQIKEVDEFGNYSCPHYKGTIVVYKVPKGKIVPNLNQSLVINENHSQLPICKLPLKLPKHKKLINRPQSTKRVSKDPVEALWDNLLHWLAEELSEENAESLSSTLPLRRSTIQLIKLKNPDDLTEQIHEFLCFWKKSLPTFTDKLRLLARHLRKIGRSDLAEELKFKWENKVFTEPQQCFDVAPE</sequence>
<feature type="chain" id="PRO_0000349274" description="Death domain-containing protein 1">
    <location>
        <begin position="1"/>
        <end position="781"/>
    </location>
</feature>
<feature type="domain" description="ZU5 1" evidence="2">
    <location>
        <begin position="167"/>
        <end position="301"/>
    </location>
</feature>
<feature type="domain" description="ZU5 2" evidence="2">
    <location>
        <begin position="302"/>
        <end position="483"/>
    </location>
</feature>
<feature type="domain" description="Death" evidence="1">
    <location>
        <begin position="679"/>
        <end position="764"/>
    </location>
</feature>
<feature type="splice variant" id="VSP_035302" description="In isoform 2." evidence="5">
    <location>
        <begin position="1"/>
        <end position="165"/>
    </location>
</feature>
<feature type="splice variant" id="VSP_035303" description="In isoform 2." evidence="5">
    <original>NIMEKE</original>
    <variation>MCLEKR</variation>
    <location>
        <begin position="166"/>
        <end position="171"/>
    </location>
</feature>
<feature type="sequence variant" id="VAR_046339" description="In dbSNP:rs16992035.">
    <original>G</original>
    <variation>R</variation>
    <location>
        <position position="26"/>
    </location>
</feature>
<feature type="sequence variant" id="VAR_046340" description="In dbSNP:rs1995319." evidence="3 4">
    <original>V</original>
    <variation>D</variation>
    <location>
        <position position="179"/>
    </location>
</feature>
<feature type="sequence variant" id="VAR_046341" description="In dbSNP:rs12507599." evidence="4">
    <original>R</original>
    <variation>C</variation>
    <location>
        <position position="552"/>
    </location>
</feature>
<feature type="sequence variant" id="VAR_046342" description="In dbSNP:rs9654132." evidence="3">
    <original>R</original>
    <variation>H</variation>
    <location>
        <position position="662"/>
    </location>
</feature>
<feature type="sequence conflict" description="In Ref. 1; BAG65199/BAH14894." evidence="6" ref="1">
    <original>R</original>
    <variation>S</variation>
    <location>
        <position position="749"/>
    </location>
</feature>
<organism>
    <name type="scientific">Homo sapiens</name>
    <name type="common">Human</name>
    <dbReference type="NCBI Taxonomy" id="9606"/>
    <lineage>
        <taxon>Eukaryota</taxon>
        <taxon>Metazoa</taxon>
        <taxon>Chordata</taxon>
        <taxon>Craniata</taxon>
        <taxon>Vertebrata</taxon>
        <taxon>Euteleostomi</taxon>
        <taxon>Mammalia</taxon>
        <taxon>Eutheria</taxon>
        <taxon>Euarchontoglires</taxon>
        <taxon>Primates</taxon>
        <taxon>Haplorrhini</taxon>
        <taxon>Catarrhini</taxon>
        <taxon>Hominidae</taxon>
        <taxon>Homo</taxon>
    </lineage>
</organism>
<evidence type="ECO:0000255" key="1">
    <source>
        <dbReference type="PROSITE-ProRule" id="PRU00064"/>
    </source>
</evidence>
<evidence type="ECO:0000255" key="2">
    <source>
        <dbReference type="PROSITE-ProRule" id="PRU00485"/>
    </source>
</evidence>
<evidence type="ECO:0000269" key="3">
    <source>
    </source>
</evidence>
<evidence type="ECO:0000269" key="4">
    <source>
    </source>
</evidence>
<evidence type="ECO:0000303" key="5">
    <source>
    </source>
</evidence>
<evidence type="ECO:0000305" key="6"/>